<organism>
    <name type="scientific">Caenorhabditis elegans</name>
    <dbReference type="NCBI Taxonomy" id="6239"/>
    <lineage>
        <taxon>Eukaryota</taxon>
        <taxon>Metazoa</taxon>
        <taxon>Ecdysozoa</taxon>
        <taxon>Nematoda</taxon>
        <taxon>Chromadorea</taxon>
        <taxon>Rhabditida</taxon>
        <taxon>Rhabditina</taxon>
        <taxon>Rhabditomorpha</taxon>
        <taxon>Rhabditoidea</taxon>
        <taxon>Rhabditidae</taxon>
        <taxon>Peloderinae</taxon>
        <taxon>Caenorhabditis</taxon>
    </lineage>
</organism>
<comment type="function">
    <text evidence="1">Binds specifically to cytosolic chaperonin (c-CPN) and transfers target proteins to it. Binds to nascent polypeptide chain and promotes folding in an environment in which there are many competing pathways for nonnative proteins (By similarity).</text>
</comment>
<comment type="subunit">
    <text evidence="1">Heterohexamer of two PFD-alpha type and four PFD-beta type subunits.</text>
</comment>
<comment type="similarity">
    <text evidence="2">Belongs to the prefoldin subunit alpha family.</text>
</comment>
<gene>
    <name type="primary">pfd-5</name>
    <name type="ORF">R151.9</name>
</gene>
<reference key="1">
    <citation type="journal article" date="1998" name="Science">
        <title>Genome sequence of the nematode C. elegans: a platform for investigating biology.</title>
        <authorList>
            <consortium name="The C. elegans sequencing consortium"/>
        </authorList>
    </citation>
    <scope>NUCLEOTIDE SEQUENCE [LARGE SCALE GENOMIC DNA]</scope>
    <source>
        <strain>Bristol N2</strain>
    </source>
</reference>
<reference key="2">
    <citation type="submission" date="2000-08" db="EMBL/GenBank/DDBJ databases">
        <title>The Caenorhabditis elegans transcriptome project, a complementary view of the genome.</title>
        <authorList>
            <person name="Kohara Y."/>
            <person name="Shin-i T."/>
            <person name="Suzuki Y."/>
            <person name="Sugano S."/>
            <person name="Potdevin M."/>
            <person name="Thierry-Mieg Y."/>
            <person name="Thierry-Mieg D."/>
            <person name="Thierry-Mieg J."/>
        </authorList>
    </citation>
    <scope>NUCLEOTIDE SEQUENCE [LARGE SCALE MRNA]</scope>
    <source>
        <strain>Bristol N2</strain>
    </source>
</reference>
<reference key="3">
    <citation type="journal article" date="2008" name="Dev. Biol.">
        <title>Efficient chaperone-mediated tubulin biogenesis is essential for cell division and cell migration in C. elegans.</title>
        <authorList>
            <person name="Lundin V.F."/>
            <person name="Srayko M."/>
            <person name="Hyman A.A."/>
            <person name="Leroux M.R."/>
        </authorList>
    </citation>
    <scope>IDENTIFICATION</scope>
</reference>
<keyword id="KW-0143">Chaperone</keyword>
<keyword id="KW-1185">Reference proteome</keyword>
<protein>
    <recommendedName>
        <fullName>Probable prefoldin subunit 5</fullName>
    </recommendedName>
</protein>
<dbReference type="EMBL" id="FO081317">
    <property type="protein sequence ID" value="CCD70764.1"/>
    <property type="molecule type" value="Genomic_DNA"/>
</dbReference>
<dbReference type="EMBL" id="AF303258">
    <property type="protein sequence ID" value="AAG50216.1"/>
    <property type="molecule type" value="mRNA"/>
</dbReference>
<dbReference type="PIR" id="T16760">
    <property type="entry name" value="T16760"/>
</dbReference>
<dbReference type="RefSeq" id="NP_498582.1">
    <property type="nucleotide sequence ID" value="NM_066181.6"/>
</dbReference>
<dbReference type="SMR" id="Q21993"/>
<dbReference type="BioGRID" id="41225">
    <property type="interactions" value="14"/>
</dbReference>
<dbReference type="DIP" id="DIP-25712N"/>
<dbReference type="FunCoup" id="Q21993">
    <property type="interactions" value="2672"/>
</dbReference>
<dbReference type="IntAct" id="Q21993">
    <property type="interactions" value="4"/>
</dbReference>
<dbReference type="STRING" id="6239.R151.9.1"/>
<dbReference type="PaxDb" id="6239-R151.9"/>
<dbReference type="PeptideAtlas" id="Q21993"/>
<dbReference type="EnsemblMetazoa" id="R151.9.1">
    <property type="protein sequence ID" value="R151.9.1"/>
    <property type="gene ID" value="WBGene00020112"/>
</dbReference>
<dbReference type="GeneID" id="176013"/>
<dbReference type="KEGG" id="cel:CELE_R151.9"/>
<dbReference type="AGR" id="WB:WBGene00020112"/>
<dbReference type="CTD" id="176013"/>
<dbReference type="WormBase" id="R151.9">
    <property type="protein sequence ID" value="CE00827"/>
    <property type="gene ID" value="WBGene00020112"/>
    <property type="gene designation" value="pfd-5"/>
</dbReference>
<dbReference type="eggNOG" id="KOG3048">
    <property type="taxonomic scope" value="Eukaryota"/>
</dbReference>
<dbReference type="GeneTree" id="ENSGT00390000008783"/>
<dbReference type="HOGENOM" id="CLU_091867_0_1_1"/>
<dbReference type="InParanoid" id="Q21993"/>
<dbReference type="OMA" id="QAKFKAC"/>
<dbReference type="OrthoDB" id="10267474at2759"/>
<dbReference type="PhylomeDB" id="Q21993"/>
<dbReference type="PRO" id="PR:Q21993"/>
<dbReference type="Proteomes" id="UP000001940">
    <property type="component" value="Chromosome III"/>
</dbReference>
<dbReference type="Bgee" id="WBGene00020112">
    <property type="expression patterns" value="Expressed in germ line (C elegans) and 4 other cell types or tissues"/>
</dbReference>
<dbReference type="GO" id="GO:0005737">
    <property type="term" value="C:cytoplasm"/>
    <property type="evidence" value="ECO:0000318"/>
    <property type="project" value="GO_Central"/>
</dbReference>
<dbReference type="GO" id="GO:0016272">
    <property type="term" value="C:prefoldin complex"/>
    <property type="evidence" value="ECO:0000318"/>
    <property type="project" value="GO_Central"/>
</dbReference>
<dbReference type="GO" id="GO:0051082">
    <property type="term" value="F:unfolded protein binding"/>
    <property type="evidence" value="ECO:0007669"/>
    <property type="project" value="InterPro"/>
</dbReference>
<dbReference type="GO" id="GO:0006457">
    <property type="term" value="P:protein folding"/>
    <property type="evidence" value="ECO:0007669"/>
    <property type="project" value="InterPro"/>
</dbReference>
<dbReference type="GO" id="GO:1990113">
    <property type="term" value="P:RNA polymerase I assembly"/>
    <property type="evidence" value="ECO:0000318"/>
    <property type="project" value="GO_Central"/>
</dbReference>
<dbReference type="GO" id="GO:1990114">
    <property type="term" value="P:RNA polymerase II core complex assembly"/>
    <property type="evidence" value="ECO:0000318"/>
    <property type="project" value="GO_Central"/>
</dbReference>
<dbReference type="GO" id="GO:1990115">
    <property type="term" value="P:RNA polymerase III assembly"/>
    <property type="evidence" value="ECO:0000318"/>
    <property type="project" value="GO_Central"/>
</dbReference>
<dbReference type="CDD" id="cd23157">
    <property type="entry name" value="Prefoldin_5"/>
    <property type="match status" value="1"/>
</dbReference>
<dbReference type="FunFam" id="1.10.287.370:FF:000039">
    <property type="entry name" value="Probable prefoldin subunit 5"/>
    <property type="match status" value="1"/>
</dbReference>
<dbReference type="Gene3D" id="1.10.287.370">
    <property type="match status" value="1"/>
</dbReference>
<dbReference type="InterPro" id="IPR011599">
    <property type="entry name" value="PFD_alpha_archaea"/>
</dbReference>
<dbReference type="InterPro" id="IPR009053">
    <property type="entry name" value="Prefoldin"/>
</dbReference>
<dbReference type="InterPro" id="IPR004127">
    <property type="entry name" value="Prefoldin_subunit_alpha"/>
</dbReference>
<dbReference type="NCBIfam" id="TIGR00293">
    <property type="entry name" value="prefoldin subunit alpha"/>
    <property type="match status" value="1"/>
</dbReference>
<dbReference type="PANTHER" id="PTHR12674">
    <property type="entry name" value="PREFOLDIN SUBUNIT 5"/>
    <property type="match status" value="1"/>
</dbReference>
<dbReference type="PANTHER" id="PTHR12674:SF2">
    <property type="entry name" value="PREFOLDIN SUBUNIT 5"/>
    <property type="match status" value="1"/>
</dbReference>
<dbReference type="Pfam" id="PF02996">
    <property type="entry name" value="Prefoldin"/>
    <property type="match status" value="1"/>
</dbReference>
<dbReference type="SUPFAM" id="SSF46579">
    <property type="entry name" value="Prefoldin"/>
    <property type="match status" value="1"/>
</dbReference>
<sequence>MAEEPKGVPLSELSLQQLGELQKNCEQELNFFQESFNALKGLLTRNEKSISALDDVKIATAGHTALIPLSESLYIRAELSDPSKHLVEIGTGYFVELDREKAKAIFDRKKEHITKQVETVEGILKEKRRTRAYISDAFQTKVQSQLATMNTQ</sequence>
<proteinExistence type="evidence at transcript level"/>
<name>PFD5_CAEEL</name>
<feature type="chain" id="PRO_0000153664" description="Probable prefoldin subunit 5">
    <location>
        <begin position="1"/>
        <end position="152"/>
    </location>
</feature>
<accession>Q21993</accession>
<evidence type="ECO:0000250" key="1"/>
<evidence type="ECO:0000305" key="2"/>